<protein>
    <recommendedName>
        <fullName evidence="1">Non-structural protein 1</fullName>
        <shortName evidence="1">NS1</shortName>
    </recommendedName>
    <alternativeName>
        <fullName evidence="1">NS1A</fullName>
    </alternativeName>
</protein>
<organism>
    <name type="scientific">Influenza C virus (strain C/California/1978)</name>
    <dbReference type="NCBI Taxonomy" id="203224"/>
    <lineage>
        <taxon>Viruses</taxon>
        <taxon>Riboviria</taxon>
        <taxon>Orthornavirae</taxon>
        <taxon>Negarnaviricota</taxon>
        <taxon>Polyploviricotina</taxon>
        <taxon>Insthoviricetes</taxon>
        <taxon>Articulavirales</taxon>
        <taxon>Orthomyxoviridae</taxon>
        <taxon>Gammainfluenzavirus</taxon>
        <taxon>Gammainfluenzavirus influenzae</taxon>
        <taxon>Influenza C virus</taxon>
    </lineage>
</organism>
<proteinExistence type="inferred from homology"/>
<evidence type="ECO:0000255" key="1">
    <source>
        <dbReference type="HAMAP-Rule" id="MF_04066"/>
    </source>
</evidence>
<evidence type="ECO:0000305" key="2"/>
<feature type="chain" id="PRO_0000044586" description="Non-structural protein 1">
    <location>
        <begin position="1"/>
        <end position="246"/>
    </location>
</feature>
<reference key="1">
    <citation type="journal article" date="1985" name="J. Virol.">
        <title>Influenza C virus RNA 7 codes for a nonstructural protein.</title>
        <authorList>
            <person name="Nakada S."/>
            <person name="Graves P.N."/>
            <person name="Desselberger U."/>
            <person name="Creager R.S."/>
            <person name="Krystal M."/>
            <person name="Palese P."/>
        </authorList>
    </citation>
    <scope>NUCLEOTIDE SEQUENCE [GENOMIC RNA]</scope>
</reference>
<reference key="2">
    <citation type="journal article" date="2004" name="Epidemiol. Infect.">
        <title>Characterization of antigenically and genetically similar influenza C viruses isolated in Japan during the 1999-2000 season.</title>
        <authorList>
            <person name="Matsuzaki Y."/>
            <person name="Takao S."/>
            <person name="Shimada S."/>
            <person name="Mizuta K."/>
            <person name="Sugawara K."/>
            <person name="Takashita E."/>
            <person name="Muraki Y."/>
            <person name="Hongo S."/>
            <person name="Nishimura H."/>
        </authorList>
    </citation>
    <scope>NUCLEOTIDE SEQUENCE [GENOMIC RNA]</scope>
</reference>
<name>NS1_INCCA</name>
<accession>P06944</accession>
<accession>Q68BV4</accession>
<keyword id="KW-0025">Alternative splicing</keyword>
<keyword id="KW-1035">Host cytoplasm</keyword>
<keyword id="KW-1048">Host nucleus</keyword>
<keyword id="KW-0945">Host-virus interaction</keyword>
<keyword id="KW-1090">Inhibition of host innate immune response by virus</keyword>
<keyword id="KW-1114">Inhibition of host interferon signaling pathway by virus</keyword>
<keyword id="KW-1088">Inhibition of host RIG-I by virus</keyword>
<keyword id="KW-1113">Inhibition of host RLR pathway by virus</keyword>
<keyword id="KW-0922">Interferon antiviral system evasion</keyword>
<keyword id="KW-0694">RNA-binding</keyword>
<keyword id="KW-0899">Viral immunoevasion</keyword>
<gene>
    <name evidence="1" type="primary">NS</name>
</gene>
<comment type="function">
    <text evidence="1">Prevents the establishment of the cellular antiviral state initiated by host RIGI, which normally triggers the antiviral transduction signal that leads to the activation of type I IFN genes by transcription factors IRF3 and IRF7. Also participates in the up-regulation of the splicing of viral mRNAs.</text>
</comment>
<comment type="subcellular location">
    <subcellularLocation>
        <location evidence="1">Host cytoplasm</location>
    </subcellularLocation>
    <subcellularLocation>
        <location evidence="1">Host nucleus</location>
    </subcellularLocation>
</comment>
<comment type="alternative products">
    <event type="alternative splicing"/>
    <isoform>
        <id>P06944-1</id>
        <name>NS1</name>
        <sequence type="displayed"/>
    </isoform>
    <isoform>
        <id>P33493-1</id>
        <name>NEP</name>
        <name>NS2</name>
        <sequence type="external"/>
    </isoform>
</comment>
<comment type="similarity">
    <text evidence="1">Belongs to the influenza C viruses NS1 family.</text>
</comment>
<comment type="sequence caution" evidence="2">
    <conflict type="frameshift">
        <sequence resource="EMBL-CDS" id="AAA43780"/>
    </conflict>
</comment>
<organismHost>
    <name type="scientific">Homo sapiens</name>
    <name type="common">Human</name>
    <dbReference type="NCBI Taxonomy" id="9606"/>
</organismHost>
<organismHost>
    <name type="scientific">Sus scrofa</name>
    <name type="common">Pig</name>
    <dbReference type="NCBI Taxonomy" id="9823"/>
</organismHost>
<sequence length="246" mass="27739">MSDKTVKSTNLMAFVATKMLERQEDLDTCTEMQVEKMKTSTKARLRTESSFAPRTWEDAIKDGELLFNGTILQAESTTMTPASVEMKGKKFPIDFVPSNIAPIGQNPIYLSPCIPNFDGNVWEATMYHHRGATLTKTMNCNCFQRTIWCHPNPSRMRLSYAFVLYCRNTKKICGYLIAKQVAGIETGIRKCFRCIKSGFVMATDEISLIILQSIKSGAQLDPYWGNETPDIDKTEAYMLSLREAGP</sequence>
<dbReference type="EMBL" id="M10087">
    <property type="protein sequence ID" value="AAA43780.1"/>
    <property type="status" value="ALT_FRAME"/>
    <property type="molecule type" value="Genomic_RNA"/>
</dbReference>
<dbReference type="EMBL" id="AB099625">
    <property type="protein sequence ID" value="BAD37133.1"/>
    <property type="molecule type" value="Genomic_RNA"/>
</dbReference>
<dbReference type="PIR" id="A25320">
    <property type="entry name" value="MNIVC7"/>
</dbReference>
<dbReference type="GO" id="GO:0030430">
    <property type="term" value="C:host cell cytoplasm"/>
    <property type="evidence" value="ECO:0007669"/>
    <property type="project" value="UniProtKB-SubCell"/>
</dbReference>
<dbReference type="GO" id="GO:0042025">
    <property type="term" value="C:host cell nucleus"/>
    <property type="evidence" value="ECO:0007669"/>
    <property type="project" value="UniProtKB-SubCell"/>
</dbReference>
<dbReference type="GO" id="GO:0003723">
    <property type="term" value="F:RNA binding"/>
    <property type="evidence" value="ECO:0007669"/>
    <property type="project" value="UniProtKB-KW"/>
</dbReference>
<dbReference type="GO" id="GO:0039540">
    <property type="term" value="P:symbiont-mediated suppression of host cytoplasmic pattern recognition receptor signaling pathway via inhibition of RIG-I activity"/>
    <property type="evidence" value="ECO:0007669"/>
    <property type="project" value="UniProtKB-KW"/>
</dbReference>
<dbReference type="GO" id="GO:0039502">
    <property type="term" value="P:symbiont-mediated suppression of host type I interferon-mediated signaling pathway"/>
    <property type="evidence" value="ECO:0007669"/>
    <property type="project" value="UniProtKB-KW"/>
</dbReference>
<dbReference type="HAMAP" id="MF_04066">
    <property type="entry name" value="INFV_NS1"/>
    <property type="match status" value="1"/>
</dbReference>
<dbReference type="InterPro" id="IPR005187">
    <property type="entry name" value="Flu_C_NS1"/>
</dbReference>
<dbReference type="InterPro" id="IPR005188">
    <property type="entry name" value="Flu_C_NS2"/>
</dbReference>
<dbReference type="InterPro" id="IPR004208">
    <property type="entry name" value="NS1"/>
</dbReference>
<dbReference type="Pfam" id="PF03506">
    <property type="entry name" value="Flu_C_NS1"/>
    <property type="match status" value="1"/>
</dbReference>
<dbReference type="Pfam" id="PF03555">
    <property type="entry name" value="Flu_C_NS2"/>
    <property type="match status" value="1"/>
</dbReference>